<proteinExistence type="evidence at protein level"/>
<name>RL17_CAEEL</name>
<evidence type="ECO:0000256" key="1">
    <source>
        <dbReference type="SAM" id="MobiDB-lite"/>
    </source>
</evidence>
<evidence type="ECO:0000305" key="2"/>
<sequence length="187" mass="21513">MTKVHYSRAPENSTKSCKARGSDLRVHFKNTHEAAMALRGMPLRRAQAFLNHVKEHKEIVPFRRFHGGIGRAAQTKQWNTTQGRWPVKSADFLLDLLKNAESNAEYKGLDVDHLVIEHINVQRAAKLRRRTYRAHGRINPYMSSPCHIEVILAEKEDVVSKPTDDAAPKVKKESKRKQRRQLARGEF</sequence>
<feature type="chain" id="PRO_0000323400" description="Large ribosomal subunit protein uL22">
    <location>
        <begin position="1"/>
        <end position="187"/>
    </location>
</feature>
<feature type="region of interest" description="Disordered" evidence="1">
    <location>
        <begin position="159"/>
        <end position="187"/>
    </location>
</feature>
<feature type="compositionally biased region" description="Basic and acidic residues" evidence="1">
    <location>
        <begin position="159"/>
        <end position="171"/>
    </location>
</feature>
<feature type="compositionally biased region" description="Basic residues" evidence="1">
    <location>
        <begin position="172"/>
        <end position="187"/>
    </location>
</feature>
<feature type="splice variant" id="VSP_032019" description="In isoform b." evidence="2">
    <location>
        <begin position="66"/>
        <end position="93"/>
    </location>
</feature>
<comment type="alternative products">
    <event type="alternative splicing"/>
    <isoform>
        <id>Q9BL19-1</id>
        <name>a</name>
        <sequence type="displayed"/>
    </isoform>
    <isoform>
        <id>Q9BL19-2</id>
        <name>b</name>
        <sequence type="described" ref="VSP_032019"/>
    </isoform>
</comment>
<comment type="similarity">
    <text evidence="2">Belongs to the universal ribosomal protein uL22 family.</text>
</comment>
<organism>
    <name type="scientific">Caenorhabditis elegans</name>
    <dbReference type="NCBI Taxonomy" id="6239"/>
    <lineage>
        <taxon>Eukaryota</taxon>
        <taxon>Metazoa</taxon>
        <taxon>Ecdysozoa</taxon>
        <taxon>Nematoda</taxon>
        <taxon>Chromadorea</taxon>
        <taxon>Rhabditida</taxon>
        <taxon>Rhabditina</taxon>
        <taxon>Rhabditomorpha</taxon>
        <taxon>Rhabditoidea</taxon>
        <taxon>Rhabditidae</taxon>
        <taxon>Peloderinae</taxon>
        <taxon>Caenorhabditis</taxon>
    </lineage>
</organism>
<protein>
    <recommendedName>
        <fullName evidence="2">Large ribosomal subunit protein uL22</fullName>
    </recommendedName>
    <alternativeName>
        <fullName>60S ribosomal protein L17</fullName>
    </alternativeName>
</protein>
<accession>Q9BL19</accession>
<accession>Q8WTK4</accession>
<dbReference type="EMBL" id="FO081800">
    <property type="protein sequence ID" value="CCD73463.1"/>
    <property type="molecule type" value="Genomic_DNA"/>
</dbReference>
<dbReference type="EMBL" id="FO081800">
    <property type="protein sequence ID" value="CCD73464.1"/>
    <property type="molecule type" value="Genomic_DNA"/>
</dbReference>
<dbReference type="RefSeq" id="NP_740781.1">
    <molecule id="Q9BL19-1"/>
    <property type="nucleotide sequence ID" value="NM_170799.7"/>
</dbReference>
<dbReference type="PDB" id="9BH5">
    <property type="method" value="EM"/>
    <property type="resolution" value="2.63 A"/>
    <property type="chains" value="CP=1-187"/>
</dbReference>
<dbReference type="PDB" id="9CAI">
    <property type="method" value="EM"/>
    <property type="resolution" value="2.59 A"/>
    <property type="chains" value="CP=1-187"/>
</dbReference>
<dbReference type="PDBsum" id="9BH5"/>
<dbReference type="PDBsum" id="9CAI"/>
<dbReference type="EMDB" id="EMD-44533"/>
<dbReference type="EMDB" id="EMD-45392"/>
<dbReference type="SMR" id="Q9BL19"/>
<dbReference type="BioGRID" id="37191">
    <property type="interactions" value="101"/>
</dbReference>
<dbReference type="DIP" id="DIP-26651N"/>
<dbReference type="FunCoup" id="Q9BL19">
    <property type="interactions" value="1898"/>
</dbReference>
<dbReference type="STRING" id="6239.Y48G8AL.8.1"/>
<dbReference type="PaxDb" id="6239-Y48G8AL.8a"/>
<dbReference type="PeptideAtlas" id="Q9BL19"/>
<dbReference type="EnsemblMetazoa" id="Y48G8AL.8.1">
    <molecule id="Q9BL19-1"/>
    <property type="protein sequence ID" value="Y48G8AL.8.1"/>
    <property type="gene ID" value="WBGene00004429"/>
</dbReference>
<dbReference type="GeneID" id="171692"/>
<dbReference type="KEGG" id="cel:CELE_Y48G8AL.8"/>
<dbReference type="UCSC" id="Y48G8AL.8b">
    <molecule id="Q9BL19-1"/>
    <property type="organism name" value="c. elegans"/>
</dbReference>
<dbReference type="AGR" id="WB:WBGene00004429"/>
<dbReference type="CTD" id="171692"/>
<dbReference type="WormBase" id="Y48G8AL.8">
    <molecule id="Q9BL19-1"/>
    <property type="protein sequence ID" value="CE22195"/>
    <property type="gene ID" value="WBGene00004429"/>
    <property type="gene designation" value="rpl-17"/>
</dbReference>
<dbReference type="eggNOG" id="KOG3353">
    <property type="taxonomic scope" value="Eukaryota"/>
</dbReference>
<dbReference type="GeneTree" id="ENSGT00950000183010"/>
<dbReference type="HOGENOM" id="CLU_083987_0_1_1"/>
<dbReference type="InParanoid" id="Q9BL19"/>
<dbReference type="OMA" id="NTYETAR"/>
<dbReference type="OrthoDB" id="10254664at2759"/>
<dbReference type="PhylomeDB" id="Q9BL19"/>
<dbReference type="Reactome" id="R-CEL-156827">
    <property type="pathway name" value="L13a-mediated translational silencing of Ceruloplasmin expression"/>
</dbReference>
<dbReference type="Reactome" id="R-CEL-1799339">
    <property type="pathway name" value="SRP-dependent cotranslational protein targeting to membrane"/>
</dbReference>
<dbReference type="Reactome" id="R-CEL-72689">
    <property type="pathway name" value="Formation of a pool of free 40S subunits"/>
</dbReference>
<dbReference type="Reactome" id="R-CEL-72706">
    <property type="pathway name" value="GTP hydrolysis and joining of the 60S ribosomal subunit"/>
</dbReference>
<dbReference type="Reactome" id="R-CEL-975956">
    <property type="pathway name" value="Nonsense Mediated Decay (NMD) independent of the Exon Junction Complex (EJC)"/>
</dbReference>
<dbReference type="Reactome" id="R-CEL-975957">
    <property type="pathway name" value="Nonsense Mediated Decay (NMD) enhanced by the Exon Junction Complex (EJC)"/>
</dbReference>
<dbReference type="PRO" id="PR:Q9BL19"/>
<dbReference type="Proteomes" id="UP000001940">
    <property type="component" value="Chromosome I"/>
</dbReference>
<dbReference type="Bgee" id="WBGene00004429">
    <property type="expression patterns" value="Expressed in germ line (C elegans) and 4 other cell types or tissues"/>
</dbReference>
<dbReference type="GO" id="GO:0022625">
    <property type="term" value="C:cytosolic large ribosomal subunit"/>
    <property type="evidence" value="ECO:0000318"/>
    <property type="project" value="GO_Central"/>
</dbReference>
<dbReference type="GO" id="GO:0003735">
    <property type="term" value="F:structural constituent of ribosome"/>
    <property type="evidence" value="ECO:0000318"/>
    <property type="project" value="GO_Central"/>
</dbReference>
<dbReference type="GO" id="GO:0002181">
    <property type="term" value="P:cytoplasmic translation"/>
    <property type="evidence" value="ECO:0000318"/>
    <property type="project" value="GO_Central"/>
</dbReference>
<dbReference type="CDD" id="cd00336">
    <property type="entry name" value="Ribosomal_L22"/>
    <property type="match status" value="1"/>
</dbReference>
<dbReference type="FunFam" id="3.90.470.10:FF:000003">
    <property type="entry name" value="60S ribosomal protein L17"/>
    <property type="match status" value="1"/>
</dbReference>
<dbReference type="Gene3D" id="3.90.470.10">
    <property type="entry name" value="Ribosomal protein L22/L17"/>
    <property type="match status" value="1"/>
</dbReference>
<dbReference type="HAMAP" id="MF_01331_A">
    <property type="entry name" value="Ribosomal_uL22_A"/>
    <property type="match status" value="1"/>
</dbReference>
<dbReference type="InterPro" id="IPR001063">
    <property type="entry name" value="Ribosomal_uL22"/>
</dbReference>
<dbReference type="InterPro" id="IPR018260">
    <property type="entry name" value="Ribosomal_uL22_CS"/>
</dbReference>
<dbReference type="InterPro" id="IPR005721">
    <property type="entry name" value="Ribosomal_uL22_euk/arc"/>
</dbReference>
<dbReference type="InterPro" id="IPR036394">
    <property type="entry name" value="Ribosomal_uL22_sf"/>
</dbReference>
<dbReference type="NCBIfam" id="NF003260">
    <property type="entry name" value="PRK04223.1"/>
    <property type="match status" value="1"/>
</dbReference>
<dbReference type="NCBIfam" id="TIGR01038">
    <property type="entry name" value="uL22_arch_euk"/>
    <property type="match status" value="1"/>
</dbReference>
<dbReference type="PANTHER" id="PTHR11593">
    <property type="entry name" value="60S RIBOSOMAL PROTEIN L17"/>
    <property type="match status" value="1"/>
</dbReference>
<dbReference type="PANTHER" id="PTHR11593:SF10">
    <property type="entry name" value="60S RIBOSOMAL PROTEIN L17"/>
    <property type="match status" value="1"/>
</dbReference>
<dbReference type="Pfam" id="PF00237">
    <property type="entry name" value="Ribosomal_L22"/>
    <property type="match status" value="1"/>
</dbReference>
<dbReference type="SUPFAM" id="SSF54843">
    <property type="entry name" value="Ribosomal protein L22"/>
    <property type="match status" value="1"/>
</dbReference>
<dbReference type="PROSITE" id="PS00464">
    <property type="entry name" value="RIBOSOMAL_L22"/>
    <property type="match status" value="1"/>
</dbReference>
<keyword id="KW-0002">3D-structure</keyword>
<keyword id="KW-0025">Alternative splicing</keyword>
<keyword id="KW-1185">Reference proteome</keyword>
<keyword id="KW-0687">Ribonucleoprotein</keyword>
<keyword id="KW-0689">Ribosomal protein</keyword>
<gene>
    <name type="primary">rpl-17</name>
    <name type="ORF">Y48G8AL.8</name>
</gene>
<reference key="1">
    <citation type="journal article" date="1998" name="Science">
        <title>Genome sequence of the nematode C. elegans: a platform for investigating biology.</title>
        <authorList>
            <consortium name="The C. elegans sequencing consortium"/>
        </authorList>
    </citation>
    <scope>NUCLEOTIDE SEQUENCE [LARGE SCALE GENOMIC DNA]</scope>
    <scope>ALTERNATIVE SPLICING</scope>
    <source>
        <strain>Bristol N2</strain>
    </source>
</reference>